<dbReference type="EMBL" id="CP001101">
    <property type="protein sequence ID" value="ACE05393.1"/>
    <property type="molecule type" value="Genomic_DNA"/>
</dbReference>
<dbReference type="SMR" id="B3EQ95"/>
<dbReference type="STRING" id="331678.Cphamn1_2499"/>
<dbReference type="KEGG" id="cpb:Cphamn1_2499"/>
<dbReference type="eggNOG" id="COG0712">
    <property type="taxonomic scope" value="Bacteria"/>
</dbReference>
<dbReference type="HOGENOM" id="CLU_085114_4_0_10"/>
<dbReference type="OrthoDB" id="9802471at2"/>
<dbReference type="GO" id="GO:0005886">
    <property type="term" value="C:plasma membrane"/>
    <property type="evidence" value="ECO:0007669"/>
    <property type="project" value="UniProtKB-SubCell"/>
</dbReference>
<dbReference type="GO" id="GO:0045259">
    <property type="term" value="C:proton-transporting ATP synthase complex"/>
    <property type="evidence" value="ECO:0007669"/>
    <property type="project" value="UniProtKB-KW"/>
</dbReference>
<dbReference type="GO" id="GO:0046933">
    <property type="term" value="F:proton-transporting ATP synthase activity, rotational mechanism"/>
    <property type="evidence" value="ECO:0007669"/>
    <property type="project" value="UniProtKB-UniRule"/>
</dbReference>
<dbReference type="Gene3D" id="1.10.520.20">
    <property type="entry name" value="N-terminal domain of the delta subunit of the F1F0-ATP synthase"/>
    <property type="match status" value="1"/>
</dbReference>
<dbReference type="HAMAP" id="MF_01416">
    <property type="entry name" value="ATP_synth_delta_bact"/>
    <property type="match status" value="1"/>
</dbReference>
<dbReference type="InterPro" id="IPR026015">
    <property type="entry name" value="ATP_synth_OSCP/delta_N_sf"/>
</dbReference>
<dbReference type="InterPro" id="IPR000711">
    <property type="entry name" value="ATPase_OSCP/dsu"/>
</dbReference>
<dbReference type="NCBIfam" id="TIGR01145">
    <property type="entry name" value="ATP_synt_delta"/>
    <property type="match status" value="1"/>
</dbReference>
<dbReference type="PANTHER" id="PTHR11910">
    <property type="entry name" value="ATP SYNTHASE DELTA CHAIN"/>
    <property type="match status" value="1"/>
</dbReference>
<dbReference type="Pfam" id="PF00213">
    <property type="entry name" value="OSCP"/>
    <property type="match status" value="1"/>
</dbReference>
<dbReference type="PRINTS" id="PR00125">
    <property type="entry name" value="ATPASEDELTA"/>
</dbReference>
<dbReference type="SUPFAM" id="SSF47928">
    <property type="entry name" value="N-terminal domain of the delta subunit of the F1F0-ATP synthase"/>
    <property type="match status" value="1"/>
</dbReference>
<accession>B3EQ95</accession>
<protein>
    <recommendedName>
        <fullName evidence="1">ATP synthase subunit delta</fullName>
    </recommendedName>
    <alternativeName>
        <fullName evidence="1">ATP synthase F(1) sector subunit delta</fullName>
    </alternativeName>
    <alternativeName>
        <fullName evidence="1">F-type ATPase subunit delta</fullName>
        <shortName evidence="1">F-ATPase subunit delta</shortName>
    </alternativeName>
</protein>
<sequence length="180" mass="19792">MSSTIASRRYAKALLDVAEEGGYVDQMVNDLDAVREVVAESRDLLTMLRSPVVNGDLKARILKEVFNGAVSGKTMLFFELLCRKKRAGLLADVIEEFSALRDERGGVVNVDVTSAVKLNDEQSRKLINGLSVYTGKKVRARLSLDEHLIGGVKVQIGDTILDNTVVHQLERLKHALGEEA</sequence>
<proteinExistence type="inferred from homology"/>
<feature type="chain" id="PRO_0000370938" description="ATP synthase subunit delta">
    <location>
        <begin position="1"/>
        <end position="180"/>
    </location>
</feature>
<gene>
    <name evidence="1" type="primary">atpH</name>
    <name type="ordered locus">Cphamn1_2499</name>
</gene>
<reference key="1">
    <citation type="submission" date="2008-06" db="EMBL/GenBank/DDBJ databases">
        <title>Complete sequence of Chlorobium phaeobacteroides BS1.</title>
        <authorList>
            <consortium name="US DOE Joint Genome Institute"/>
            <person name="Lucas S."/>
            <person name="Copeland A."/>
            <person name="Lapidus A."/>
            <person name="Glavina del Rio T."/>
            <person name="Dalin E."/>
            <person name="Tice H."/>
            <person name="Bruce D."/>
            <person name="Goodwin L."/>
            <person name="Pitluck S."/>
            <person name="Schmutz J."/>
            <person name="Larimer F."/>
            <person name="Land M."/>
            <person name="Hauser L."/>
            <person name="Kyrpides N."/>
            <person name="Ovchinnikova G."/>
            <person name="Li T."/>
            <person name="Liu Z."/>
            <person name="Zhao F."/>
            <person name="Overmann J."/>
            <person name="Bryant D.A."/>
            <person name="Richardson P."/>
        </authorList>
    </citation>
    <scope>NUCLEOTIDE SEQUENCE [LARGE SCALE GENOMIC DNA]</scope>
    <source>
        <strain>BS1</strain>
    </source>
</reference>
<keyword id="KW-0066">ATP synthesis</keyword>
<keyword id="KW-0997">Cell inner membrane</keyword>
<keyword id="KW-1003">Cell membrane</keyword>
<keyword id="KW-0139">CF(1)</keyword>
<keyword id="KW-0375">Hydrogen ion transport</keyword>
<keyword id="KW-0406">Ion transport</keyword>
<keyword id="KW-0472">Membrane</keyword>
<keyword id="KW-0813">Transport</keyword>
<name>ATPD_CHLPB</name>
<organism>
    <name type="scientific">Chlorobium phaeobacteroides (strain BS1)</name>
    <dbReference type="NCBI Taxonomy" id="331678"/>
    <lineage>
        <taxon>Bacteria</taxon>
        <taxon>Pseudomonadati</taxon>
        <taxon>Chlorobiota</taxon>
        <taxon>Chlorobiia</taxon>
        <taxon>Chlorobiales</taxon>
        <taxon>Chlorobiaceae</taxon>
        <taxon>Chlorobium/Pelodictyon group</taxon>
        <taxon>Chlorobium</taxon>
    </lineage>
</organism>
<comment type="function">
    <text evidence="1">F(1)F(0) ATP synthase produces ATP from ADP in the presence of a proton or sodium gradient. F-type ATPases consist of two structural domains, F(1) containing the extramembraneous catalytic core and F(0) containing the membrane proton channel, linked together by a central stalk and a peripheral stalk. During catalysis, ATP synthesis in the catalytic domain of F(1) is coupled via a rotary mechanism of the central stalk subunits to proton translocation.</text>
</comment>
<comment type="function">
    <text evidence="1">This protein is part of the stalk that links CF(0) to CF(1). It either transmits conformational changes from CF(0) to CF(1) or is implicated in proton conduction.</text>
</comment>
<comment type="subunit">
    <text evidence="1">F-type ATPases have 2 components, F(1) - the catalytic core - and F(0) - the membrane proton channel. F(1) has five subunits: alpha(3), beta(3), gamma(1), delta(1), epsilon(1). F(0) has three main subunits: a(1), b(2) and c(10-14). The alpha and beta chains form an alternating ring which encloses part of the gamma chain. F(1) is attached to F(0) by a central stalk formed by the gamma and epsilon chains, while a peripheral stalk is formed by the delta and b chains.</text>
</comment>
<comment type="subcellular location">
    <subcellularLocation>
        <location evidence="1">Cell inner membrane</location>
        <topology evidence="1">Peripheral membrane protein</topology>
    </subcellularLocation>
</comment>
<comment type="similarity">
    <text evidence="1">Belongs to the ATPase delta chain family.</text>
</comment>
<evidence type="ECO:0000255" key="1">
    <source>
        <dbReference type="HAMAP-Rule" id="MF_01416"/>
    </source>
</evidence>